<proteinExistence type="inferred from homology"/>
<accession>Q6HI24</accession>
<gene>
    <name type="ordered locus">BT9727_2476</name>
</gene>
<sequence>MNDLRYPIGQFTYKRPITEEMIDTWIQEIEDLPNELTKAIKDLDQKQLDTPYRVGGWTVRQVVHHVVDSHMNSYIRFKLALTEKNPTIKPYKEEKWAELPDSKLPVDVSLVMLESLHKRWVNLLYSLELEDLEKTFNHPETGETKLAAAIGLYAWHGRHHTAHITSLRKRLNW</sequence>
<dbReference type="EC" id="3.-.-.-" evidence="1"/>
<dbReference type="EMBL" id="AE017355">
    <property type="protein sequence ID" value="AAT63063.1"/>
    <property type="molecule type" value="Genomic_DNA"/>
</dbReference>
<dbReference type="RefSeq" id="WP_000999077.1">
    <property type="nucleotide sequence ID" value="NC_005957.1"/>
</dbReference>
<dbReference type="RefSeq" id="YP_036802.1">
    <property type="nucleotide sequence ID" value="NC_005957.1"/>
</dbReference>
<dbReference type="SMR" id="Q6HI24"/>
<dbReference type="KEGG" id="btk:BT9727_2476"/>
<dbReference type="PATRIC" id="fig|281309.8.peg.2623"/>
<dbReference type="HOGENOM" id="CLU_105789_1_0_9"/>
<dbReference type="Proteomes" id="UP000001301">
    <property type="component" value="Chromosome"/>
</dbReference>
<dbReference type="GO" id="GO:0005737">
    <property type="term" value="C:cytoplasm"/>
    <property type="evidence" value="ECO:0007669"/>
    <property type="project" value="UniProtKB-SubCell"/>
</dbReference>
<dbReference type="GO" id="GO:0016787">
    <property type="term" value="F:hydrolase activity"/>
    <property type="evidence" value="ECO:0007669"/>
    <property type="project" value="UniProtKB-UniRule"/>
</dbReference>
<dbReference type="GO" id="GO:0008270">
    <property type="term" value="F:zinc ion binding"/>
    <property type="evidence" value="ECO:0007669"/>
    <property type="project" value="UniProtKB-UniRule"/>
</dbReference>
<dbReference type="Gene3D" id="1.20.120.450">
    <property type="entry name" value="dinb family like domain"/>
    <property type="match status" value="1"/>
</dbReference>
<dbReference type="HAMAP" id="MF_01256">
    <property type="entry name" value="YfiT_hydrol"/>
    <property type="match status" value="1"/>
</dbReference>
<dbReference type="InterPro" id="IPR024775">
    <property type="entry name" value="DinB-like"/>
</dbReference>
<dbReference type="InterPro" id="IPR034660">
    <property type="entry name" value="DinB/YfiT-like"/>
</dbReference>
<dbReference type="InterPro" id="IPR023774">
    <property type="entry name" value="Put_metal_dep_hydrolase_YfiT"/>
</dbReference>
<dbReference type="NCBIfam" id="NF009807">
    <property type="entry name" value="PRK13291.1"/>
    <property type="match status" value="1"/>
</dbReference>
<dbReference type="Pfam" id="PF12867">
    <property type="entry name" value="DinB_2"/>
    <property type="match status" value="1"/>
</dbReference>
<dbReference type="SUPFAM" id="SSF109854">
    <property type="entry name" value="DinB/YfiT-like putative metalloenzymes"/>
    <property type="match status" value="1"/>
</dbReference>
<organism>
    <name type="scientific">Bacillus thuringiensis subsp. konkukian (strain 97-27)</name>
    <dbReference type="NCBI Taxonomy" id="281309"/>
    <lineage>
        <taxon>Bacteria</taxon>
        <taxon>Bacillati</taxon>
        <taxon>Bacillota</taxon>
        <taxon>Bacilli</taxon>
        <taxon>Bacillales</taxon>
        <taxon>Bacillaceae</taxon>
        <taxon>Bacillus</taxon>
        <taxon>Bacillus cereus group</taxon>
    </lineage>
</organism>
<feature type="chain" id="PRO_0000162371" description="Putative metal-dependent hydrolase BT9727_2476">
    <location>
        <begin position="1"/>
        <end position="173"/>
    </location>
</feature>
<feature type="binding site" evidence="1">
    <location>
        <position position="65"/>
    </location>
    <ligand>
        <name>Zn(2+)</name>
        <dbReference type="ChEBI" id="CHEBI:29105"/>
    </ligand>
</feature>
<feature type="binding site" evidence="1">
    <location>
        <position position="156"/>
    </location>
    <ligand>
        <name>Zn(2+)</name>
        <dbReference type="ChEBI" id="CHEBI:29105"/>
    </ligand>
</feature>
<feature type="binding site" evidence="1">
    <location>
        <position position="160"/>
    </location>
    <ligand>
        <name>Zn(2+)</name>
        <dbReference type="ChEBI" id="CHEBI:29105"/>
    </ligand>
</feature>
<reference key="1">
    <citation type="journal article" date="2006" name="J. Bacteriol.">
        <title>Pathogenomic sequence analysis of Bacillus cereus and Bacillus thuringiensis isolates closely related to Bacillus anthracis.</title>
        <authorList>
            <person name="Han C.S."/>
            <person name="Xie G."/>
            <person name="Challacombe J.F."/>
            <person name="Altherr M.R."/>
            <person name="Bhotika S.S."/>
            <person name="Bruce D."/>
            <person name="Campbell C.S."/>
            <person name="Campbell M.L."/>
            <person name="Chen J."/>
            <person name="Chertkov O."/>
            <person name="Cleland C."/>
            <person name="Dimitrijevic M."/>
            <person name="Doggett N.A."/>
            <person name="Fawcett J.J."/>
            <person name="Glavina T."/>
            <person name="Goodwin L.A."/>
            <person name="Hill K.K."/>
            <person name="Hitchcock P."/>
            <person name="Jackson P.J."/>
            <person name="Keim P."/>
            <person name="Kewalramani A.R."/>
            <person name="Longmire J."/>
            <person name="Lucas S."/>
            <person name="Malfatti S."/>
            <person name="McMurry K."/>
            <person name="Meincke L.J."/>
            <person name="Misra M."/>
            <person name="Moseman B.L."/>
            <person name="Mundt M."/>
            <person name="Munk A.C."/>
            <person name="Okinaka R.T."/>
            <person name="Parson-Quintana B."/>
            <person name="Reilly L.P."/>
            <person name="Richardson P."/>
            <person name="Robinson D.L."/>
            <person name="Rubin E."/>
            <person name="Saunders E."/>
            <person name="Tapia R."/>
            <person name="Tesmer J.G."/>
            <person name="Thayer N."/>
            <person name="Thompson L.S."/>
            <person name="Tice H."/>
            <person name="Ticknor L.O."/>
            <person name="Wills P.L."/>
            <person name="Brettin T.S."/>
            <person name="Gilna P."/>
        </authorList>
    </citation>
    <scope>NUCLEOTIDE SEQUENCE [LARGE SCALE GENOMIC DNA]</scope>
    <source>
        <strain>97-27</strain>
    </source>
</reference>
<keyword id="KW-0963">Cytoplasm</keyword>
<keyword id="KW-0378">Hydrolase</keyword>
<keyword id="KW-0479">Metal-binding</keyword>
<keyword id="KW-0862">Zinc</keyword>
<name>Y2476_BACHK</name>
<comment type="function">
    <text evidence="1">Possible metal-dependent hydrolase.</text>
</comment>
<comment type="cofactor">
    <cofactor evidence="1">
        <name>Zn(2+)</name>
        <dbReference type="ChEBI" id="CHEBI:29105"/>
    </cofactor>
    <text evidence="1">Binds 1 zinc ion per subunit.</text>
</comment>
<comment type="subunit">
    <text evidence="1">Homodimer.</text>
</comment>
<comment type="subcellular location">
    <subcellularLocation>
        <location evidence="1">Cytoplasm</location>
    </subcellularLocation>
</comment>
<comment type="similarity">
    <text evidence="1">Belongs to the metal hydrolase YfiT family.</text>
</comment>
<protein>
    <recommendedName>
        <fullName evidence="1">Putative metal-dependent hydrolase BT9727_2476</fullName>
        <ecNumber evidence="1">3.-.-.-</ecNumber>
    </recommendedName>
</protein>
<evidence type="ECO:0000255" key="1">
    <source>
        <dbReference type="HAMAP-Rule" id="MF_01256"/>
    </source>
</evidence>